<evidence type="ECO:0000255" key="1"/>
<evidence type="ECO:0000255" key="2">
    <source>
        <dbReference type="PROSITE-ProRule" id="PRU00498"/>
    </source>
</evidence>
<evidence type="ECO:0000256" key="3">
    <source>
        <dbReference type="SAM" id="MobiDB-lite"/>
    </source>
</evidence>
<evidence type="ECO:0000269" key="4">
    <source>
    </source>
</evidence>
<evidence type="ECO:0000303" key="5">
    <source>
    </source>
</evidence>
<evidence type="ECO:0000305" key="6"/>
<evidence type="ECO:0000305" key="7">
    <source>
    </source>
</evidence>
<protein>
    <recommendedName>
        <fullName evidence="5">Aquaglyceroporin-2</fullName>
    </recommendedName>
</protein>
<name>AQP2_RHIIR</name>
<feature type="chain" id="PRO_0000457437" description="Aquaglyceroporin-2">
    <location>
        <begin position="1"/>
        <end position="316"/>
    </location>
</feature>
<feature type="topological domain" description="Cytoplasmic" evidence="7">
    <location>
        <begin position="1"/>
        <end position="59"/>
    </location>
</feature>
<feature type="transmembrane region" description="Helical" evidence="1">
    <location>
        <begin position="60"/>
        <end position="80"/>
    </location>
</feature>
<feature type="topological domain" description="Extracellular" evidence="7">
    <location>
        <begin position="81"/>
        <end position="86"/>
    </location>
</feature>
<feature type="transmembrane region" description="Helical" evidence="1">
    <location>
        <begin position="87"/>
        <end position="107"/>
    </location>
</feature>
<feature type="topological domain" description="Cytoplasmic" evidence="7">
    <location>
        <begin position="108"/>
        <end position="131"/>
    </location>
</feature>
<feature type="transmembrane region" description="Helical" evidence="1">
    <location>
        <begin position="132"/>
        <end position="152"/>
    </location>
</feature>
<feature type="topological domain" description="Extracellular" evidence="7">
    <location>
        <begin position="153"/>
        <end position="187"/>
    </location>
</feature>
<feature type="transmembrane region" description="Helical" evidence="1">
    <location>
        <begin position="188"/>
        <end position="208"/>
    </location>
</feature>
<feature type="topological domain" description="Cytoplasmic" evidence="7">
    <location>
        <begin position="209"/>
        <end position="219"/>
    </location>
</feature>
<feature type="transmembrane region" description="Helical" evidence="1">
    <location>
        <begin position="220"/>
        <end position="240"/>
    </location>
</feature>
<feature type="topological domain" description="Extracellular" evidence="7">
    <location>
        <begin position="241"/>
        <end position="271"/>
    </location>
</feature>
<feature type="transmembrane region" description="Helical" evidence="1">
    <location>
        <begin position="272"/>
        <end position="292"/>
    </location>
</feature>
<feature type="topological domain" description="Cytoplasmic" evidence="7">
    <location>
        <begin position="293"/>
        <end position="316"/>
    </location>
</feature>
<feature type="region of interest" description="Disordered" evidence="3">
    <location>
        <begin position="1"/>
        <end position="31"/>
    </location>
</feature>
<feature type="short sequence motif" description="NPA 1" evidence="7">
    <location>
        <begin position="114"/>
        <end position="116"/>
    </location>
</feature>
<feature type="short sequence motif" description="NPA 2" evidence="7">
    <location>
        <begin position="246"/>
        <end position="248"/>
    </location>
</feature>
<feature type="compositionally biased region" description="Polar residues" evidence="3">
    <location>
        <begin position="11"/>
        <end position="24"/>
    </location>
</feature>
<feature type="glycosylation site" description="N-linked (GlcNAc...) asparagine" evidence="2">
    <location>
        <position position="172"/>
    </location>
</feature>
<reference key="1">
    <citation type="journal article" date="2013" name="New Phytol.">
        <title>First cloning and characterization of two functional aquaporin genes from an arbuscular mycorrhizal fungus Glomus intraradices.</title>
        <authorList>
            <person name="Li T."/>
            <person name="Hu Y.J."/>
            <person name="Hao Z.P."/>
            <person name="Li H."/>
            <person name="Wang Y.S."/>
            <person name="Chen B.D."/>
        </authorList>
    </citation>
    <scope>NUCLEOTIDE SEQUENCE [MRNA]</scope>
    <scope>FUNCTION</scope>
    <scope>DOMAIN</scope>
    <scope>TOPOLOGY</scope>
    <scope>SUBCELLULAR LOCATION</scope>
    <scope>TRANSPORTER ACTIVITY</scope>
    <scope>ACTIVITY REGULATION</scope>
    <scope>INDUCTION</scope>
</reference>
<organism>
    <name type="scientific">Rhizophagus irregularis</name>
    <name type="common">Arbuscular mycorrhizal fungus</name>
    <name type="synonym">Glomus intraradices</name>
    <dbReference type="NCBI Taxonomy" id="4876"/>
    <lineage>
        <taxon>Eukaryota</taxon>
        <taxon>Fungi</taxon>
        <taxon>Fungi incertae sedis</taxon>
        <taxon>Mucoromycota</taxon>
        <taxon>Glomeromycotina</taxon>
        <taxon>Glomeromycetes</taxon>
        <taxon>Glomerales</taxon>
        <taxon>Glomeraceae</taxon>
        <taxon>Rhizophagus</taxon>
    </lineage>
</organism>
<comment type="function">
    <text evidence="4">Water channel required to facilitate the transport of water across membranes (PubMed:23157494). Stimulates plant drought tolerance by facilitating the transport of water from the arbuscular mycorrhiza fungus to host plants (PubMed:23157494).</text>
</comment>
<comment type="catalytic activity">
    <reaction evidence="4">
        <text>H2O(in) = H2O(out)</text>
        <dbReference type="Rhea" id="RHEA:29667"/>
        <dbReference type="ChEBI" id="CHEBI:15377"/>
    </reaction>
</comment>
<comment type="catalytic activity">
    <reaction evidence="4">
        <text>glycerol(in) = glycerol(out)</text>
        <dbReference type="Rhea" id="RHEA:29675"/>
        <dbReference type="ChEBI" id="CHEBI:17754"/>
    </reaction>
</comment>
<comment type="activity regulation">
    <text evidence="4">Polyethylene glycol (PEG) stimulates whereas glycerol inhibits the aquaporin activity.</text>
</comment>
<comment type="subcellular location">
    <subcellularLocation>
        <location evidence="4">Cell membrane</location>
        <topology evidence="1">Multi-pass membrane protein</topology>
    </subcellularLocation>
    <subcellularLocation>
        <location evidence="4">Membrane</location>
        <topology evidence="1">Multi-pass membrane protein</topology>
    </subcellularLocation>
    <text evidence="4">Shows a clear localization to the plasma membrane as well as intracellular membranes.</text>
</comment>
<comment type="induction">
    <text evidence="4">Expression is increased significantly in arbuscule-enriched cortical cells and extraradical mycelia of maize roots under drought stress.</text>
</comment>
<comment type="domain">
    <text evidence="7">Aquaporins contain two tandem repeats each containing three membrane-spanning domains and a pore-forming loop with the signature motif Asn-Pro-Ala (NPA) (Probable). AQFP2 has NPA/NAA motifs which is in accordance with the fungal aquaporins (NPx and NxA) (Probable).</text>
</comment>
<comment type="similarity">
    <text evidence="6">Belongs to the MIP/aquaporin (TC 1.A.8) family.</text>
</comment>
<sequence>MADERGPINKSGPSSTYGATENNGESGGTRGAPATEDVIVIQDSGWYYIKFRFKEPFAEFLGTFILVAFGVGAIAQTVLSKGATGNWITIALGFGLGLALGIAVSGHYSGGHLNPAVTITLAIYRKFPWVKVPVYITAQVLGAFVAAAVIYLNYLPAIYNFAGDKRDVIGANATAGIFATYPQPFMSIGGAFFSEALGTFFLLFVILAMTDERNVPTTRIVAPITIGLTLTAIAISLGFETGFSLNAARDFGPRLFTFFIGYGVEVFTAYKFYFWIPLVAPIVGGLVAGFVYDSLLYWGEKSFLNKNVHHEHRAVA</sequence>
<proteinExistence type="evidence at protein level"/>
<dbReference type="EMBL" id="JQ412060">
    <property type="protein sequence ID" value="AFK93203.1"/>
    <property type="molecule type" value="mRNA"/>
</dbReference>
<dbReference type="SMR" id="I3W9F7"/>
<dbReference type="VEuPathDB" id="FungiDB:FUN_024007"/>
<dbReference type="VEuPathDB" id="FungiDB:RhiirA1_419484"/>
<dbReference type="VEuPathDB" id="FungiDB:RhiirFUN_004734"/>
<dbReference type="GO" id="GO:0005886">
    <property type="term" value="C:plasma membrane"/>
    <property type="evidence" value="ECO:0007669"/>
    <property type="project" value="UniProtKB-SubCell"/>
</dbReference>
<dbReference type="GO" id="GO:0015254">
    <property type="term" value="F:glycerol channel activity"/>
    <property type="evidence" value="ECO:0007669"/>
    <property type="project" value="TreeGrafter"/>
</dbReference>
<dbReference type="GO" id="GO:0015250">
    <property type="term" value="F:water channel activity"/>
    <property type="evidence" value="ECO:0007669"/>
    <property type="project" value="TreeGrafter"/>
</dbReference>
<dbReference type="CDD" id="cd00333">
    <property type="entry name" value="MIP"/>
    <property type="match status" value="1"/>
</dbReference>
<dbReference type="Gene3D" id="1.20.1080.10">
    <property type="entry name" value="Glycerol uptake facilitator protein"/>
    <property type="match status" value="1"/>
</dbReference>
<dbReference type="InterPro" id="IPR023271">
    <property type="entry name" value="Aquaporin-like"/>
</dbReference>
<dbReference type="InterPro" id="IPR000425">
    <property type="entry name" value="MIP"/>
</dbReference>
<dbReference type="InterPro" id="IPR050363">
    <property type="entry name" value="MIP/Aquaporin"/>
</dbReference>
<dbReference type="InterPro" id="IPR022357">
    <property type="entry name" value="MIP_CS"/>
</dbReference>
<dbReference type="NCBIfam" id="TIGR00861">
    <property type="entry name" value="MIP"/>
    <property type="match status" value="1"/>
</dbReference>
<dbReference type="PANTHER" id="PTHR43829">
    <property type="entry name" value="AQUAPORIN OR AQUAGLYCEROPORIN RELATED"/>
    <property type="match status" value="1"/>
</dbReference>
<dbReference type="PANTHER" id="PTHR43829:SF9">
    <property type="entry name" value="AQUAPORIN-9"/>
    <property type="match status" value="1"/>
</dbReference>
<dbReference type="Pfam" id="PF00230">
    <property type="entry name" value="MIP"/>
    <property type="match status" value="1"/>
</dbReference>
<dbReference type="PRINTS" id="PR00783">
    <property type="entry name" value="MINTRINSICP"/>
</dbReference>
<dbReference type="SUPFAM" id="SSF81338">
    <property type="entry name" value="Aquaporin-like"/>
    <property type="match status" value="1"/>
</dbReference>
<dbReference type="PROSITE" id="PS00221">
    <property type="entry name" value="MIP"/>
    <property type="match status" value="1"/>
</dbReference>
<keyword id="KW-1003">Cell membrane</keyword>
<keyword id="KW-0325">Glycoprotein</keyword>
<keyword id="KW-0472">Membrane</keyword>
<keyword id="KW-0677">Repeat</keyword>
<keyword id="KW-0812">Transmembrane</keyword>
<keyword id="KW-1133">Transmembrane helix</keyword>
<keyword id="KW-0813">Transport</keyword>
<accession>I3W9F7</accession>
<gene>
    <name evidence="5" type="primary">AQPF2</name>
</gene>